<comment type="function">
    <text evidence="2">Catalytic component of the signal peptidase complex (SPC) which catalyzes the cleavage of N-terminal signal sequences from nascent proteins as they are translocated into the lumen of the endoplasmic reticulum. Specifically cleaves N-terminal signal peptides that contain a hydrophobic alpha-helix (h-region) shorter than 18-20 amino acids.</text>
</comment>
<comment type="catalytic activity">
    <reaction evidence="2">
        <text>Cleavage of hydrophobic, N-terminal signal or leader sequences from secreted and periplasmic proteins.</text>
        <dbReference type="EC" id="3.4.21.89"/>
    </reaction>
</comment>
<comment type="subunit">
    <text evidence="2">Component of the signal peptidase complex paralog A (SPC-A) composed of a catalytic subunit SEC11A and three accessory subunits SPCS1, SPCS2 and SPCS3. Within the complex, interacts with SPCS2 and SPCS3. The complex induces a local thinning of the ER membrane which is used to measure the length of the signal peptide (SP) h-region of protein substrates. This ensures the selectivity of the complex towards h-regions shorter than 18-20 amino acids.</text>
</comment>
<comment type="subcellular location">
    <subcellularLocation>
        <location evidence="1">Endoplasmic reticulum membrane</location>
        <topology evidence="1">Single-pass type II membrane protein</topology>
    </subcellularLocation>
</comment>
<comment type="domain">
    <text evidence="2">The C-terminal short (CTS) helix is essential for catalytic activity. It may be accommodated as a transmembrane helix in the thinned membrane environment of the complex, similarly to the signal peptide in the complex substrates.</text>
</comment>
<comment type="similarity">
    <text evidence="4">Belongs to the peptidase S26B family.</text>
</comment>
<protein>
    <recommendedName>
        <fullName>Signal peptidase complex catalytic subunit SEC11A</fullName>
        <ecNumber evidence="2">3.4.21.89</ecNumber>
    </recommendedName>
    <alternativeName>
        <fullName>Endopeptidase SP18</fullName>
    </alternativeName>
    <alternativeName>
        <fullName>Microsomal signal peptidase 18 kDa subunit</fullName>
        <shortName>SPase 18 kDa subunit</shortName>
    </alternativeName>
    <alternativeName>
        <fullName>SEC11 homolog A</fullName>
    </alternativeName>
    <alternativeName>
        <fullName>SEC11-like protein 1</fullName>
    </alternativeName>
    <alternativeName>
        <fullName>SPC18</fullName>
    </alternativeName>
</protein>
<dbReference type="EC" id="3.4.21.89" evidence="2"/>
<dbReference type="EMBL" id="CR859462">
    <property type="protein sequence ID" value="CAH91633.1"/>
    <property type="molecule type" value="mRNA"/>
</dbReference>
<dbReference type="RefSeq" id="NP_001127445.1">
    <property type="nucleotide sequence ID" value="NM_001133973.1"/>
</dbReference>
<dbReference type="RefSeq" id="XP_063572135.1">
    <property type="nucleotide sequence ID" value="XM_063716065.1"/>
</dbReference>
<dbReference type="SMR" id="Q5R9C7"/>
<dbReference type="FunCoup" id="Q5R9C7">
    <property type="interactions" value="1396"/>
</dbReference>
<dbReference type="STRING" id="9601.ENSPPYP00000007791"/>
<dbReference type="MEROPS" id="S26.009"/>
<dbReference type="Ensembl" id="ENSPPYT00000008118.2">
    <property type="protein sequence ID" value="ENSPPYP00000007791.1"/>
    <property type="gene ID" value="ENSPPYG00000006881.3"/>
</dbReference>
<dbReference type="GeneID" id="100174516"/>
<dbReference type="KEGG" id="pon:100174516"/>
<dbReference type="CTD" id="23478"/>
<dbReference type="eggNOG" id="KOG3342">
    <property type="taxonomic scope" value="Eukaryota"/>
</dbReference>
<dbReference type="GeneTree" id="ENSGT00390000015600"/>
<dbReference type="HOGENOM" id="CLU_089996_0_0_1"/>
<dbReference type="InParanoid" id="Q5R9C7"/>
<dbReference type="OMA" id="ILMNEYP"/>
<dbReference type="OrthoDB" id="10257561at2759"/>
<dbReference type="TreeFam" id="TF313648"/>
<dbReference type="Proteomes" id="UP000001595">
    <property type="component" value="Chromosome 15"/>
</dbReference>
<dbReference type="GO" id="GO:0005787">
    <property type="term" value="C:signal peptidase complex"/>
    <property type="evidence" value="ECO:0000250"/>
    <property type="project" value="UniProtKB"/>
</dbReference>
<dbReference type="GO" id="GO:0004252">
    <property type="term" value="F:serine-type endopeptidase activity"/>
    <property type="evidence" value="ECO:0000250"/>
    <property type="project" value="UniProtKB"/>
</dbReference>
<dbReference type="GO" id="GO:0006465">
    <property type="term" value="P:signal peptide processing"/>
    <property type="evidence" value="ECO:0000250"/>
    <property type="project" value="UniProtKB"/>
</dbReference>
<dbReference type="CDD" id="cd06530">
    <property type="entry name" value="S26_SPase_I"/>
    <property type="match status" value="1"/>
</dbReference>
<dbReference type="FunFam" id="2.10.109.10:FF:000003">
    <property type="entry name" value="Signal peptidase complex catalytic subunit SEC11"/>
    <property type="match status" value="1"/>
</dbReference>
<dbReference type="Gene3D" id="2.10.109.10">
    <property type="entry name" value="Umud Fragment, subunit A"/>
    <property type="match status" value="1"/>
</dbReference>
<dbReference type="InterPro" id="IPR036286">
    <property type="entry name" value="LexA/Signal_pep-like_sf"/>
</dbReference>
<dbReference type="InterPro" id="IPR019758">
    <property type="entry name" value="Pept_S26A_signal_pept_1_CS"/>
</dbReference>
<dbReference type="InterPro" id="IPR019756">
    <property type="entry name" value="Pept_S26A_signal_pept_1_Ser-AS"/>
</dbReference>
<dbReference type="InterPro" id="IPR015927">
    <property type="entry name" value="Peptidase_S24_S26A/B/C"/>
</dbReference>
<dbReference type="InterPro" id="IPR019533">
    <property type="entry name" value="Peptidase_S26"/>
</dbReference>
<dbReference type="InterPro" id="IPR001733">
    <property type="entry name" value="Peptidase_S26B"/>
</dbReference>
<dbReference type="NCBIfam" id="TIGR02228">
    <property type="entry name" value="sigpep_I_arch"/>
    <property type="match status" value="1"/>
</dbReference>
<dbReference type="PANTHER" id="PTHR10806">
    <property type="entry name" value="SIGNAL PEPTIDASE COMPLEX CATALYTIC SUBUNIT SEC11"/>
    <property type="match status" value="1"/>
</dbReference>
<dbReference type="PANTHER" id="PTHR10806:SF28">
    <property type="entry name" value="SIGNAL PEPTIDASE COMPLEX CATALYTIC SUBUNIT SEC11B-RELATED"/>
    <property type="match status" value="1"/>
</dbReference>
<dbReference type="Pfam" id="PF00717">
    <property type="entry name" value="Peptidase_S24"/>
    <property type="match status" value="1"/>
</dbReference>
<dbReference type="PRINTS" id="PR00728">
    <property type="entry name" value="SIGNALPTASE"/>
</dbReference>
<dbReference type="SUPFAM" id="SSF51306">
    <property type="entry name" value="LexA/Signal peptidase"/>
    <property type="match status" value="1"/>
</dbReference>
<dbReference type="PROSITE" id="PS00501">
    <property type="entry name" value="SPASE_I_1"/>
    <property type="match status" value="1"/>
</dbReference>
<dbReference type="PROSITE" id="PS00761">
    <property type="entry name" value="SPASE_I_3"/>
    <property type="match status" value="1"/>
</dbReference>
<organism>
    <name type="scientific">Pongo abelii</name>
    <name type="common">Sumatran orangutan</name>
    <name type="synonym">Pongo pygmaeus abelii</name>
    <dbReference type="NCBI Taxonomy" id="9601"/>
    <lineage>
        <taxon>Eukaryota</taxon>
        <taxon>Metazoa</taxon>
        <taxon>Chordata</taxon>
        <taxon>Craniata</taxon>
        <taxon>Vertebrata</taxon>
        <taxon>Euteleostomi</taxon>
        <taxon>Mammalia</taxon>
        <taxon>Eutheria</taxon>
        <taxon>Euarchontoglires</taxon>
        <taxon>Primates</taxon>
        <taxon>Haplorrhini</taxon>
        <taxon>Catarrhini</taxon>
        <taxon>Hominidae</taxon>
        <taxon>Pongo</taxon>
    </lineage>
</organism>
<name>SC11A_PONAB</name>
<evidence type="ECO:0000250" key="1">
    <source>
        <dbReference type="UniProtKB" id="P67811"/>
    </source>
</evidence>
<evidence type="ECO:0000250" key="2">
    <source>
        <dbReference type="UniProtKB" id="P67812"/>
    </source>
</evidence>
<evidence type="ECO:0000255" key="3"/>
<evidence type="ECO:0000305" key="4"/>
<proteinExistence type="evidence at transcript level"/>
<keyword id="KW-0256">Endoplasmic reticulum</keyword>
<keyword id="KW-0378">Hydrolase</keyword>
<keyword id="KW-0472">Membrane</keyword>
<keyword id="KW-0645">Protease</keyword>
<keyword id="KW-1185">Reference proteome</keyword>
<keyword id="KW-0735">Signal-anchor</keyword>
<keyword id="KW-0812">Transmembrane</keyword>
<keyword id="KW-1133">Transmembrane helix</keyword>
<sequence length="179" mass="20625">MLSLDFLDDVRRMNKRQLYYQVLNFGMIVSSALMIWKGLMVITGSESPIVVVLSGSMEPAFHRGDLLFLTNRVEDPIRVGEIVVFRIEGREIPIVHRVLKIHEKQNGHIKFLTKGDNNAVDDRGLYKQGQHWLEKKDVVGRARGFVPYIGIVTILMNDYPKFKYAVLFLLGLFVLVHRE</sequence>
<accession>Q5R9C7</accession>
<reference key="1">
    <citation type="submission" date="2004-11" db="EMBL/GenBank/DDBJ databases">
        <authorList>
            <consortium name="The German cDNA consortium"/>
        </authorList>
    </citation>
    <scope>NUCLEOTIDE SEQUENCE [LARGE SCALE MRNA]</scope>
    <source>
        <tissue>Kidney</tissue>
    </source>
</reference>
<gene>
    <name type="primary">SEC11A</name>
    <name type="synonym">SEC11L1</name>
</gene>
<feature type="chain" id="PRO_0000109545" description="Signal peptidase complex catalytic subunit SEC11A">
    <location>
        <begin position="1"/>
        <end position="179"/>
    </location>
</feature>
<feature type="topological domain" description="Cytoplasmic" evidence="1">
    <location>
        <begin position="1"/>
        <end position="16"/>
    </location>
</feature>
<feature type="transmembrane region" description="Helical; Signal-anchor for type II membrane protein" evidence="3">
    <location>
        <begin position="17"/>
        <end position="36"/>
    </location>
</feature>
<feature type="topological domain" description="Lumenal" evidence="1">
    <location>
        <begin position="37"/>
        <end position="179"/>
    </location>
</feature>
<feature type="region of interest" description="C-terminal short (CTS) helix" evidence="2">
    <location>
        <begin position="165"/>
        <end position="176"/>
    </location>
</feature>
<feature type="active site" description="Charge relay system" evidence="2">
    <location>
        <position position="56"/>
    </location>
</feature>
<feature type="active site" description="Charge relay system" evidence="2">
    <location>
        <position position="96"/>
    </location>
</feature>
<feature type="active site" description="Charge relay system" evidence="2">
    <location>
        <position position="122"/>
    </location>
</feature>